<protein>
    <recommendedName>
        <fullName evidence="1">Small ribosomal subunit protein uS13</fullName>
    </recommendedName>
    <alternativeName>
        <fullName evidence="3">30S ribosomal protein S13</fullName>
    </alternativeName>
</protein>
<proteinExistence type="inferred from homology"/>
<reference key="1">
    <citation type="journal article" date="2003" name="Proc. Natl. Acad. Sci. U.S.A.">
        <title>Complete genome sequence of Lactobacillus plantarum WCFS1.</title>
        <authorList>
            <person name="Kleerebezem M."/>
            <person name="Boekhorst J."/>
            <person name="van Kranenburg R."/>
            <person name="Molenaar D."/>
            <person name="Kuipers O.P."/>
            <person name="Leer R."/>
            <person name="Tarchini R."/>
            <person name="Peters S.A."/>
            <person name="Sandbrink H.M."/>
            <person name="Fiers M.W.E.J."/>
            <person name="Stiekema W."/>
            <person name="Klein Lankhorst R.M."/>
            <person name="Bron P.A."/>
            <person name="Hoffer S.M."/>
            <person name="Nierop Groot M.N."/>
            <person name="Kerkhoven R."/>
            <person name="De Vries M."/>
            <person name="Ursing B."/>
            <person name="De Vos W.M."/>
            <person name="Siezen R.J."/>
        </authorList>
    </citation>
    <scope>NUCLEOTIDE SEQUENCE [LARGE SCALE GENOMIC DNA]</scope>
    <source>
        <strain>ATCC BAA-793 / NCIMB 8826 / WCFS1</strain>
    </source>
</reference>
<reference key="2">
    <citation type="journal article" date="2012" name="J. Bacteriol.">
        <title>Complete resequencing and reannotation of the Lactobacillus plantarum WCFS1 genome.</title>
        <authorList>
            <person name="Siezen R.J."/>
            <person name="Francke C."/>
            <person name="Renckens B."/>
            <person name="Boekhorst J."/>
            <person name="Wels M."/>
            <person name="Kleerebezem M."/>
            <person name="van Hijum S.A."/>
        </authorList>
    </citation>
    <scope>NUCLEOTIDE SEQUENCE [LARGE SCALE GENOMIC DNA]</scope>
    <scope>GENOME REANNOTATION</scope>
    <source>
        <strain>ATCC BAA-793 / NCIMB 8826 / WCFS1</strain>
    </source>
</reference>
<keyword id="KW-1185">Reference proteome</keyword>
<keyword id="KW-0687">Ribonucleoprotein</keyword>
<keyword id="KW-0689">Ribosomal protein</keyword>
<keyword id="KW-0694">RNA-binding</keyword>
<keyword id="KW-0699">rRNA-binding</keyword>
<keyword id="KW-0820">tRNA-binding</keyword>
<dbReference type="EMBL" id="AL935263">
    <property type="protein sequence ID" value="CCC78468.1"/>
    <property type="molecule type" value="Genomic_DNA"/>
</dbReference>
<dbReference type="RefSeq" id="WP_003641265.1">
    <property type="nucleotide sequence ID" value="NC_004567.2"/>
</dbReference>
<dbReference type="RefSeq" id="YP_004888982.1">
    <property type="nucleotide sequence ID" value="NC_004567.2"/>
</dbReference>
<dbReference type="SMR" id="Q88XW2"/>
<dbReference type="STRING" id="220668.lp_1060"/>
<dbReference type="EnsemblBacteria" id="CCC78468">
    <property type="protein sequence ID" value="CCC78468"/>
    <property type="gene ID" value="lp_1060"/>
</dbReference>
<dbReference type="GeneID" id="89668571"/>
<dbReference type="KEGG" id="lpl:lp_1060"/>
<dbReference type="PATRIC" id="fig|220668.9.peg.895"/>
<dbReference type="eggNOG" id="COG0099">
    <property type="taxonomic scope" value="Bacteria"/>
</dbReference>
<dbReference type="HOGENOM" id="CLU_103849_1_1_9"/>
<dbReference type="OrthoDB" id="9803610at2"/>
<dbReference type="PhylomeDB" id="Q88XW2"/>
<dbReference type="Proteomes" id="UP000000432">
    <property type="component" value="Chromosome"/>
</dbReference>
<dbReference type="GO" id="GO:0005829">
    <property type="term" value="C:cytosol"/>
    <property type="evidence" value="ECO:0007669"/>
    <property type="project" value="TreeGrafter"/>
</dbReference>
<dbReference type="GO" id="GO:0015935">
    <property type="term" value="C:small ribosomal subunit"/>
    <property type="evidence" value="ECO:0007669"/>
    <property type="project" value="TreeGrafter"/>
</dbReference>
<dbReference type="GO" id="GO:0019843">
    <property type="term" value="F:rRNA binding"/>
    <property type="evidence" value="ECO:0007669"/>
    <property type="project" value="UniProtKB-UniRule"/>
</dbReference>
<dbReference type="GO" id="GO:0003735">
    <property type="term" value="F:structural constituent of ribosome"/>
    <property type="evidence" value="ECO:0007669"/>
    <property type="project" value="InterPro"/>
</dbReference>
<dbReference type="GO" id="GO:0000049">
    <property type="term" value="F:tRNA binding"/>
    <property type="evidence" value="ECO:0007669"/>
    <property type="project" value="UniProtKB-UniRule"/>
</dbReference>
<dbReference type="GO" id="GO:0006412">
    <property type="term" value="P:translation"/>
    <property type="evidence" value="ECO:0007669"/>
    <property type="project" value="UniProtKB-UniRule"/>
</dbReference>
<dbReference type="FunFam" id="1.10.8.50:FF:000001">
    <property type="entry name" value="30S ribosomal protein S13"/>
    <property type="match status" value="1"/>
</dbReference>
<dbReference type="FunFam" id="4.10.910.10:FF:000001">
    <property type="entry name" value="30S ribosomal protein S13"/>
    <property type="match status" value="1"/>
</dbReference>
<dbReference type="Gene3D" id="1.10.8.50">
    <property type="match status" value="1"/>
</dbReference>
<dbReference type="Gene3D" id="4.10.910.10">
    <property type="entry name" value="30s ribosomal protein s13, domain 2"/>
    <property type="match status" value="1"/>
</dbReference>
<dbReference type="HAMAP" id="MF_01315">
    <property type="entry name" value="Ribosomal_uS13"/>
    <property type="match status" value="1"/>
</dbReference>
<dbReference type="InterPro" id="IPR027437">
    <property type="entry name" value="Rbsml_uS13_C"/>
</dbReference>
<dbReference type="InterPro" id="IPR001892">
    <property type="entry name" value="Ribosomal_uS13"/>
</dbReference>
<dbReference type="InterPro" id="IPR010979">
    <property type="entry name" value="Ribosomal_uS13-like_H2TH"/>
</dbReference>
<dbReference type="InterPro" id="IPR019980">
    <property type="entry name" value="Ribosomal_uS13_bac-type"/>
</dbReference>
<dbReference type="InterPro" id="IPR018269">
    <property type="entry name" value="Ribosomal_uS13_CS"/>
</dbReference>
<dbReference type="NCBIfam" id="TIGR03631">
    <property type="entry name" value="uS13_bact"/>
    <property type="match status" value="1"/>
</dbReference>
<dbReference type="PANTHER" id="PTHR10871">
    <property type="entry name" value="30S RIBOSOMAL PROTEIN S13/40S RIBOSOMAL PROTEIN S18"/>
    <property type="match status" value="1"/>
</dbReference>
<dbReference type="PANTHER" id="PTHR10871:SF1">
    <property type="entry name" value="SMALL RIBOSOMAL SUBUNIT PROTEIN US13M"/>
    <property type="match status" value="1"/>
</dbReference>
<dbReference type="Pfam" id="PF00416">
    <property type="entry name" value="Ribosomal_S13"/>
    <property type="match status" value="1"/>
</dbReference>
<dbReference type="PIRSF" id="PIRSF002134">
    <property type="entry name" value="Ribosomal_S13"/>
    <property type="match status" value="1"/>
</dbReference>
<dbReference type="SUPFAM" id="SSF46946">
    <property type="entry name" value="S13-like H2TH domain"/>
    <property type="match status" value="1"/>
</dbReference>
<dbReference type="PROSITE" id="PS00646">
    <property type="entry name" value="RIBOSOMAL_S13_1"/>
    <property type="match status" value="1"/>
</dbReference>
<dbReference type="PROSITE" id="PS50159">
    <property type="entry name" value="RIBOSOMAL_S13_2"/>
    <property type="match status" value="1"/>
</dbReference>
<comment type="function">
    <text evidence="1">Located at the top of the head of the 30S subunit, it contacts several helices of the 16S rRNA. In the 70S ribosome it contacts the 23S rRNA (bridge B1a) and protein L5 of the 50S subunit (bridge B1b), connecting the 2 subunits; these bridges are implicated in subunit movement. Contacts the tRNAs in the A and P-sites.</text>
</comment>
<comment type="subunit">
    <text evidence="1">Part of the 30S ribosomal subunit. Forms a loose heterodimer with protein S19. Forms two bridges to the 50S subunit in the 70S ribosome.</text>
</comment>
<comment type="similarity">
    <text evidence="1">Belongs to the universal ribosomal protein uS13 family.</text>
</comment>
<feature type="chain" id="PRO_0000132100" description="Small ribosomal subunit protein uS13">
    <location>
        <begin position="1"/>
        <end position="121"/>
    </location>
</feature>
<feature type="region of interest" description="Disordered" evidence="2">
    <location>
        <begin position="90"/>
        <end position="121"/>
    </location>
</feature>
<gene>
    <name evidence="1" type="primary">rpsM</name>
    <name type="ordered locus">lp_1060</name>
</gene>
<organism>
    <name type="scientific">Lactiplantibacillus plantarum (strain ATCC BAA-793 / NCIMB 8826 / WCFS1)</name>
    <name type="common">Lactobacillus plantarum</name>
    <dbReference type="NCBI Taxonomy" id="220668"/>
    <lineage>
        <taxon>Bacteria</taxon>
        <taxon>Bacillati</taxon>
        <taxon>Bacillota</taxon>
        <taxon>Bacilli</taxon>
        <taxon>Lactobacillales</taxon>
        <taxon>Lactobacillaceae</taxon>
        <taxon>Lactiplantibacillus</taxon>
    </lineage>
</organism>
<name>RS13_LACPL</name>
<evidence type="ECO:0000255" key="1">
    <source>
        <dbReference type="HAMAP-Rule" id="MF_01315"/>
    </source>
</evidence>
<evidence type="ECO:0000256" key="2">
    <source>
        <dbReference type="SAM" id="MobiDB-lite"/>
    </source>
</evidence>
<evidence type="ECO:0000305" key="3"/>
<accession>Q88XW2</accession>
<accession>F9UMM9</accession>
<sequence length="121" mass="13638">MARIEGIDLPRDKRIVIGLTYIYGIGNTSAQKILAEAGVSEDVRVRDLTPDQEDKIRAVVDGYKTEGDLRREVSLNIKLLQEIGSYRGMRHRRGLPVRGQHTKNNARTRKGKKVSIAGRKK</sequence>